<proteinExistence type="evidence at protein level"/>
<gene>
    <name type="primary">grdD</name>
</gene>
<evidence type="ECO:0000269" key="1">
    <source>
    </source>
</evidence>
<protein>
    <recommendedName>
        <fullName>Glycine/sarcosine/betaine reductase complex component C subunit alpha</fullName>
        <shortName>Protein PC alpha</shortName>
        <ecNumber>1.21.4.2</ecNumber>
        <ecNumber>1.21.4.3</ecNumber>
        <ecNumber>1.21.4.4</ecNumber>
    </recommendedName>
</protein>
<dbReference type="EC" id="1.21.4.2"/>
<dbReference type="EC" id="1.21.4.3"/>
<dbReference type="EC" id="1.21.4.4"/>
<dbReference type="EMBL" id="L04500">
    <property type="protein sequence ID" value="AAB93307.1"/>
    <property type="molecule type" value="Genomic_DNA"/>
</dbReference>
<dbReference type="PIR" id="S21222">
    <property type="entry name" value="S21222"/>
</dbReference>
<dbReference type="SMR" id="Q47878"/>
<dbReference type="BioCyc" id="MetaCyc:MONOMER-20605"/>
<dbReference type="GO" id="GO:0016747">
    <property type="term" value="F:acyltransferase activity, transferring groups other than amino-acyl groups"/>
    <property type="evidence" value="ECO:0007669"/>
    <property type="project" value="InterPro"/>
</dbReference>
<dbReference type="GO" id="GO:0033795">
    <property type="term" value="F:betaine reductase activity"/>
    <property type="evidence" value="ECO:0007669"/>
    <property type="project" value="UniProtKB-EC"/>
</dbReference>
<dbReference type="GO" id="GO:0030699">
    <property type="term" value="F:glycine reductase activity"/>
    <property type="evidence" value="ECO:0007669"/>
    <property type="project" value="UniProtKB-EC"/>
</dbReference>
<dbReference type="GO" id="GO:0033794">
    <property type="term" value="F:sarcosine reductase activity"/>
    <property type="evidence" value="ECO:0007669"/>
    <property type="project" value="UniProtKB-EC"/>
</dbReference>
<dbReference type="GO" id="GO:0006633">
    <property type="term" value="P:fatty acid biosynthetic process"/>
    <property type="evidence" value="ECO:0007669"/>
    <property type="project" value="InterPro"/>
</dbReference>
<dbReference type="Gene3D" id="3.40.718.10">
    <property type="entry name" value="Isopropylmalate Dehydrogenase"/>
    <property type="match status" value="1"/>
</dbReference>
<dbReference type="InterPro" id="IPR003664">
    <property type="entry name" value="FA_synthesis"/>
</dbReference>
<dbReference type="InterPro" id="IPR012116">
    <property type="entry name" value="Gly_reductase_pC_asu"/>
</dbReference>
<dbReference type="NCBIfam" id="NF040747">
    <property type="entry name" value="reduct_C_alpha"/>
    <property type="match status" value="1"/>
</dbReference>
<dbReference type="Pfam" id="PF02504">
    <property type="entry name" value="FA_synthesis"/>
    <property type="match status" value="1"/>
</dbReference>
<dbReference type="PIRSF" id="PIRSF036593">
    <property type="entry name" value="GrdD"/>
    <property type="match status" value="1"/>
</dbReference>
<dbReference type="SUPFAM" id="SSF53659">
    <property type="entry name" value="Isocitrate/Isopropylmalate dehydrogenase-like"/>
    <property type="match status" value="1"/>
</dbReference>
<name>GRDD_PEPAC</name>
<comment type="function">
    <text>In the first step of glycine, betaine and sarcosine reductases, the substrate is bound to component PB via a Schiff base intermediate. Then the PB-activated substrate is nucleophilically attacked by the selenol anion of component PA to transform it to a carboxymethylated selenoether and the respective amine. By action of component PC, acetyl phosphate is formed, leaving component PA in its oxidized state. Finally component PA becomes reduced by the thioredoxin system to start a new catalytic cycle of reductive deamination.</text>
</comment>
<comment type="catalytic activity">
    <reaction>
        <text>acetyl phosphate + [thioredoxin]-disulfide + NH4(+) + H2O = [thioredoxin]-dithiol + glycine + phosphate + H(+)</text>
        <dbReference type="Rhea" id="RHEA:12232"/>
        <dbReference type="Rhea" id="RHEA-COMP:10698"/>
        <dbReference type="Rhea" id="RHEA-COMP:10700"/>
        <dbReference type="ChEBI" id="CHEBI:15377"/>
        <dbReference type="ChEBI" id="CHEBI:15378"/>
        <dbReference type="ChEBI" id="CHEBI:22191"/>
        <dbReference type="ChEBI" id="CHEBI:28938"/>
        <dbReference type="ChEBI" id="CHEBI:29950"/>
        <dbReference type="ChEBI" id="CHEBI:43474"/>
        <dbReference type="ChEBI" id="CHEBI:50058"/>
        <dbReference type="ChEBI" id="CHEBI:57305"/>
        <dbReference type="EC" id="1.21.4.2"/>
    </reaction>
</comment>
<comment type="catalytic activity">
    <reaction>
        <text>acetyl phosphate + methylamine + [thioredoxin]-disulfide + H2O = sarcosine + [thioredoxin]-dithiol + phosphate + H(+)</text>
        <dbReference type="Rhea" id="RHEA:12825"/>
        <dbReference type="Rhea" id="RHEA-COMP:10698"/>
        <dbReference type="Rhea" id="RHEA-COMP:10700"/>
        <dbReference type="ChEBI" id="CHEBI:15377"/>
        <dbReference type="ChEBI" id="CHEBI:15378"/>
        <dbReference type="ChEBI" id="CHEBI:22191"/>
        <dbReference type="ChEBI" id="CHEBI:29950"/>
        <dbReference type="ChEBI" id="CHEBI:43474"/>
        <dbReference type="ChEBI" id="CHEBI:50058"/>
        <dbReference type="ChEBI" id="CHEBI:57433"/>
        <dbReference type="ChEBI" id="CHEBI:59338"/>
        <dbReference type="EC" id="1.21.4.3"/>
    </reaction>
</comment>
<comment type="catalytic activity">
    <reaction>
        <text>acetyl phosphate + trimethylamine + [thioredoxin]-disulfide + H2O = glycine betaine + [thioredoxin]-dithiol + phosphate + H(+)</text>
        <dbReference type="Rhea" id="RHEA:11848"/>
        <dbReference type="Rhea" id="RHEA-COMP:10698"/>
        <dbReference type="Rhea" id="RHEA-COMP:10700"/>
        <dbReference type="ChEBI" id="CHEBI:15377"/>
        <dbReference type="ChEBI" id="CHEBI:15378"/>
        <dbReference type="ChEBI" id="CHEBI:17750"/>
        <dbReference type="ChEBI" id="CHEBI:22191"/>
        <dbReference type="ChEBI" id="CHEBI:29950"/>
        <dbReference type="ChEBI" id="CHEBI:43474"/>
        <dbReference type="ChEBI" id="CHEBI:50058"/>
        <dbReference type="ChEBI" id="CHEBI:58389"/>
        <dbReference type="EC" id="1.21.4.4"/>
    </reaction>
</comment>
<comment type="subunit">
    <text>Heterooctamer of four alpha and four beta subunits. Component of the glycine, sarcosine and betaine reductase complexes, together with proteins A and B.</text>
</comment>
<accession>Q47878</accession>
<accession>Q9R5L3</accession>
<keyword id="KW-0903">Direct protein sequencing</keyword>
<keyword id="KW-0560">Oxidoreductase</keyword>
<organism>
    <name type="scientific">Peptoclostridium acidaminophilum</name>
    <name type="common">Eubacterium acidaminophilum</name>
    <dbReference type="NCBI Taxonomy" id="1731"/>
    <lineage>
        <taxon>Bacteria</taxon>
        <taxon>Bacillati</taxon>
        <taxon>Bacillota</taxon>
        <taxon>Clostridia</taxon>
        <taxon>Peptostreptococcales</taxon>
        <taxon>Peptoclostridiaceae</taxon>
        <taxon>Peptoclostridium</taxon>
    </lineage>
</organism>
<reference key="1">
    <citation type="journal article" date="2001" name="Eur. J. Biochem.">
        <title>Cys359 of GrdD is the active-site thiol that catalyses the final step of acetyl phosphate formation by glycine reductase from Eubacterium acidaminophilum.</title>
        <authorList>
            <person name="Kohlstock U.-M."/>
            <person name="Rucknaegel K.P."/>
            <person name="Reuter M."/>
            <person name="Schierhorn A."/>
            <person name="Andreesen J.R."/>
            <person name="Soehling B."/>
        </authorList>
    </citation>
    <scope>NUCLEOTIDE SEQUENCE [GENOMIC DNA]</scope>
    <scope>MUTAGENESIS OF CYS-98 AND CYS-359</scope>
    <source>
        <strain>ATCC 49065 / DSM 3953 / al-2</strain>
    </source>
</reference>
<reference key="2">
    <citation type="journal article" date="1992" name="Eur. J. Biochem.">
        <title>Purification and characterization of protein PC, a component of glycine reductase from Eubacterium acidaminophilum.</title>
        <authorList>
            <person name="Schraeder T."/>
            <person name="Andreesen J.R."/>
        </authorList>
    </citation>
    <scope>NUCLEOTIDE SEQUENCE [GENOMIC DNA] OF 1-210</scope>
    <scope>PROTEIN SEQUENCE OF 2-30</scope>
    <source>
        <strain>ATCC 49065 / DSM 3953 / al-2</strain>
    </source>
</reference>
<feature type="chain" id="PRO_0000087602" description="Glycine/sarcosine/betaine reductase complex component C subunit alpha">
    <location>
        <begin position="1"/>
        <end position="385"/>
    </location>
</feature>
<feature type="active site">
    <location>
        <position position="359"/>
    </location>
</feature>
<feature type="mutagenesis site" description="No effect." evidence="1">
    <original>C</original>
    <variation>S</variation>
    <location>
        <position position="98"/>
    </location>
</feature>
<feature type="mutagenesis site" description="No activity." evidence="1">
    <original>C</original>
    <variation>A</variation>
    <location>
        <position position="359"/>
    </location>
</feature>
<sequence>MSDIKQMIGKTFMEIADAIETGSFAGKVKVGITTLGSEHGVENLVKGAELAAKDAAGFDIVLIGPKVETSLEVVEVATEEEAHKKMEELLDSGYIHSCVTVHYNFPIGVSTVGRVVTPGMGKEMFIATTTGTSAAQRVEAMVRNALYGIITAKSMGIENPTVGILNLDGARAVERALKELAGNGYPITFAESLRADGGSVMRGNDLLGGAADVMVTDSLTGNIMMKVFSSYTTGGSYEGLGYGYGPGIGDGYNRTILILSRASGVPVAANAIKYAAKLAQNNVKAIAAAEFKAAKAAGLESILAGLSKDTKKASTEEEVKMPPKEVVTGTISGVDVMDLEDAQKVLWKAGIYAESGMGCTGPIVMVNEAKVEEAAKILKDAGIVA</sequence>